<dbReference type="EMBL" id="FB300119">
    <property type="protein sequence ID" value="CAR81591.1"/>
    <property type="molecule type" value="Unassigned_DNA"/>
</dbReference>
<dbReference type="ConoServer" id="2943">
    <property type="toxin name" value="Ai1.1 precursor"/>
</dbReference>
<dbReference type="ConoServer" id="3454">
    <property type="toxin name" value="Sequence 289 from Patent EP1852440"/>
</dbReference>
<dbReference type="GO" id="GO:0005576">
    <property type="term" value="C:extracellular region"/>
    <property type="evidence" value="ECO:0007669"/>
    <property type="project" value="UniProtKB-SubCell"/>
</dbReference>
<dbReference type="GO" id="GO:0035792">
    <property type="term" value="C:host cell postsynaptic membrane"/>
    <property type="evidence" value="ECO:0007669"/>
    <property type="project" value="UniProtKB-KW"/>
</dbReference>
<dbReference type="GO" id="GO:0030550">
    <property type="term" value="F:acetylcholine receptor inhibitor activity"/>
    <property type="evidence" value="ECO:0007669"/>
    <property type="project" value="UniProtKB-KW"/>
</dbReference>
<dbReference type="GO" id="GO:0099106">
    <property type="term" value="F:ion channel regulator activity"/>
    <property type="evidence" value="ECO:0007669"/>
    <property type="project" value="UniProtKB-KW"/>
</dbReference>
<dbReference type="GO" id="GO:0090729">
    <property type="term" value="F:toxin activity"/>
    <property type="evidence" value="ECO:0007669"/>
    <property type="project" value="UniProtKB-KW"/>
</dbReference>
<dbReference type="InterPro" id="IPR009958">
    <property type="entry name" value="Conotoxin_a-typ"/>
</dbReference>
<dbReference type="InterPro" id="IPR018072">
    <property type="entry name" value="Conotoxin_a-typ_CS"/>
</dbReference>
<dbReference type="Pfam" id="PF07365">
    <property type="entry name" value="Toxin_8"/>
    <property type="match status" value="1"/>
</dbReference>
<dbReference type="PROSITE" id="PS60014">
    <property type="entry name" value="ALPHA_CONOTOXIN"/>
    <property type="match status" value="1"/>
</dbReference>
<reference key="1">
    <citation type="patent" date="2007-11-07" number="EP1852440">
        <title>Alpha-conotoxin peptides.</title>
        <authorList>
            <person name="Watkins M."/>
            <person name="Hillyard D.R."/>
            <person name="McIntosh M.J."/>
            <person name="Jones R.M."/>
            <person name="Olivera B.M."/>
        </authorList>
    </citation>
    <scope>NUCLEOTIDE SEQUENCE</scope>
</reference>
<comment type="function">
    <text evidence="1">Alpha-conotoxins act on postsynaptic membranes, they bind to the nicotinic acetylcholine receptors (nAChR) and thus inhibit them.</text>
</comment>
<comment type="subcellular location">
    <subcellularLocation>
        <location evidence="4">Secreted</location>
    </subcellularLocation>
</comment>
<comment type="tissue specificity">
    <text evidence="4">Expressed by the venom duct.</text>
</comment>
<comment type="domain">
    <text evidence="4">The cysteine framework is I (CC-C-C). Alpha4/7 pattern.</text>
</comment>
<comment type="similarity">
    <text evidence="4">Belongs to the conotoxin A superfamily.</text>
</comment>
<proteinExistence type="inferred from homology"/>
<accession>P0CB12</accession>
<name>CA189_CONAJ</name>
<evidence type="ECO:0000250" key="1"/>
<evidence type="ECO:0000250" key="2">
    <source>
        <dbReference type="UniProtKB" id="P56636"/>
    </source>
</evidence>
<evidence type="ECO:0000255" key="3"/>
<evidence type="ECO:0000305" key="4"/>
<feature type="signal peptide" evidence="3">
    <location>
        <begin position="1"/>
        <end position="16"/>
    </location>
</feature>
<feature type="propeptide" id="PRO_0000380626" evidence="1">
    <location>
        <begin position="17"/>
        <end position="42"/>
    </location>
</feature>
<feature type="peptide" id="PRO_0000380627" description="Alpha-conotoxin-like 289">
    <location>
        <begin position="43"/>
        <end position="59"/>
    </location>
</feature>
<feature type="region of interest" description="Ser-Xaa-Pro motif, crucial for potent interaction with nAChR" evidence="2">
    <location>
        <begin position="47"/>
        <end position="49"/>
    </location>
</feature>
<feature type="modified residue" description="Pyrrolidone carboxylic acid" evidence="1">
    <location>
        <position position="43"/>
    </location>
</feature>
<feature type="modified residue" description="Cysteine amide" evidence="1">
    <location>
        <position position="59"/>
    </location>
</feature>
<feature type="disulfide bond" evidence="2">
    <location>
        <begin position="45"/>
        <end position="51"/>
    </location>
</feature>
<feature type="disulfide bond" evidence="2">
    <location>
        <begin position="46"/>
        <end position="59"/>
    </location>
</feature>
<sequence>MFTVFLLVVLATTVVSFTSDRAFRGRNAAAKASGLVGLTDKRQECCSYPACNLDHPELCG</sequence>
<organism>
    <name type="scientific">Conus ammiralis</name>
    <name type="common">Admiral cone</name>
    <dbReference type="NCBI Taxonomy" id="97188"/>
    <lineage>
        <taxon>Eukaryota</taxon>
        <taxon>Metazoa</taxon>
        <taxon>Spiralia</taxon>
        <taxon>Lophotrochozoa</taxon>
        <taxon>Mollusca</taxon>
        <taxon>Gastropoda</taxon>
        <taxon>Caenogastropoda</taxon>
        <taxon>Neogastropoda</taxon>
        <taxon>Conoidea</taxon>
        <taxon>Conidae</taxon>
        <taxon>Conus</taxon>
        <taxon>Cylinder</taxon>
    </lineage>
</organism>
<protein>
    <recommendedName>
        <fullName>Alpha-conotoxin-like 289</fullName>
    </recommendedName>
</protein>
<keyword id="KW-0008">Acetylcholine receptor inhibiting toxin</keyword>
<keyword id="KW-0027">Amidation</keyword>
<keyword id="KW-0165">Cleavage on pair of basic residues</keyword>
<keyword id="KW-1015">Disulfide bond</keyword>
<keyword id="KW-0872">Ion channel impairing toxin</keyword>
<keyword id="KW-0528">Neurotoxin</keyword>
<keyword id="KW-0629">Postsynaptic neurotoxin</keyword>
<keyword id="KW-0873">Pyrrolidone carboxylic acid</keyword>
<keyword id="KW-0964">Secreted</keyword>
<keyword id="KW-0732">Signal</keyword>
<keyword id="KW-0800">Toxin</keyword>